<name>RP54_VIBAN</name>
<reference key="1">
    <citation type="journal article" date="1997" name="Microbiology">
        <title>RpoN of the fish pathogen Vibrio (Listonella) anguillarum is essential for flagellum production and virulence by the water-borne but not intraperitoneal route of inoculation.</title>
        <authorList>
            <person name="O'Toole R."/>
            <person name="Milton D.L."/>
            <person name="Horstedt P."/>
            <person name="Wolf-Watz H."/>
        </authorList>
    </citation>
    <scope>NUCLEOTIDE SEQUENCE [GENOMIC DNA]</scope>
    <source>
        <strain>NB10 / Serotype O1</strain>
    </source>
</reference>
<organism>
    <name type="scientific">Vibrio anguillarum</name>
    <name type="common">Listonella anguillarum</name>
    <dbReference type="NCBI Taxonomy" id="55601"/>
    <lineage>
        <taxon>Bacteria</taxon>
        <taxon>Pseudomonadati</taxon>
        <taxon>Pseudomonadota</taxon>
        <taxon>Gammaproteobacteria</taxon>
        <taxon>Vibrionales</taxon>
        <taxon>Vibrionaceae</taxon>
        <taxon>Vibrio</taxon>
    </lineage>
</organism>
<comment type="function">
    <text>Sigma factors are initiation factors that promote the attachment of RNA polymerase to specific initiation sites and are then released.</text>
</comment>
<comment type="similarity">
    <text evidence="2">Belongs to the sigma-54 factor family.</text>
</comment>
<evidence type="ECO:0000255" key="1"/>
<evidence type="ECO:0000305" key="2"/>
<dbReference type="EMBL" id="U86585">
    <property type="protein sequence ID" value="AAB95223.1"/>
    <property type="molecule type" value="Genomic_DNA"/>
</dbReference>
<dbReference type="RefSeq" id="WP_013855970.1">
    <property type="nucleotide sequence ID" value="NZ_VTYO01000030.1"/>
</dbReference>
<dbReference type="SMR" id="O08429"/>
<dbReference type="STRING" id="55601.AA407_02455"/>
<dbReference type="OMA" id="VTTQKFM"/>
<dbReference type="GO" id="GO:0000428">
    <property type="term" value="C:DNA-directed RNA polymerase complex"/>
    <property type="evidence" value="ECO:0007669"/>
    <property type="project" value="UniProtKB-KW"/>
</dbReference>
<dbReference type="GO" id="GO:0003677">
    <property type="term" value="F:DNA binding"/>
    <property type="evidence" value="ECO:0007669"/>
    <property type="project" value="UniProtKB-KW"/>
</dbReference>
<dbReference type="GO" id="GO:0001216">
    <property type="term" value="F:DNA-binding transcription activator activity"/>
    <property type="evidence" value="ECO:0007669"/>
    <property type="project" value="InterPro"/>
</dbReference>
<dbReference type="GO" id="GO:0016779">
    <property type="term" value="F:nucleotidyltransferase activity"/>
    <property type="evidence" value="ECO:0007669"/>
    <property type="project" value="UniProtKB-KW"/>
</dbReference>
<dbReference type="GO" id="GO:0016987">
    <property type="term" value="F:sigma factor activity"/>
    <property type="evidence" value="ECO:0007669"/>
    <property type="project" value="UniProtKB-KW"/>
</dbReference>
<dbReference type="GO" id="GO:0006352">
    <property type="term" value="P:DNA-templated transcription initiation"/>
    <property type="evidence" value="ECO:0007669"/>
    <property type="project" value="InterPro"/>
</dbReference>
<dbReference type="FunFam" id="1.10.10.1330:FF:000001">
    <property type="entry name" value="RNA polymerase sigma-54 factor"/>
    <property type="match status" value="1"/>
</dbReference>
<dbReference type="FunFam" id="1.10.10.60:FF:000045">
    <property type="entry name" value="RNA polymerase sigma-54 factor"/>
    <property type="match status" value="1"/>
</dbReference>
<dbReference type="Gene3D" id="1.10.10.60">
    <property type="entry name" value="Homeodomain-like"/>
    <property type="match status" value="1"/>
</dbReference>
<dbReference type="Gene3D" id="1.10.10.1330">
    <property type="entry name" value="RNA polymerase sigma-54 factor, core-binding domain"/>
    <property type="match status" value="1"/>
</dbReference>
<dbReference type="InterPro" id="IPR000394">
    <property type="entry name" value="RNA_pol_sigma_54"/>
</dbReference>
<dbReference type="InterPro" id="IPR007046">
    <property type="entry name" value="RNA_pol_sigma_54_core-bd"/>
</dbReference>
<dbReference type="InterPro" id="IPR007634">
    <property type="entry name" value="RNA_pol_sigma_54_DNA-bd"/>
</dbReference>
<dbReference type="InterPro" id="IPR038709">
    <property type="entry name" value="RpoN_core-bd_sf"/>
</dbReference>
<dbReference type="NCBIfam" id="NF004595">
    <property type="entry name" value="PRK05932.1-2"/>
    <property type="match status" value="1"/>
</dbReference>
<dbReference type="NCBIfam" id="NF009118">
    <property type="entry name" value="PRK12469.1"/>
    <property type="match status" value="1"/>
</dbReference>
<dbReference type="NCBIfam" id="TIGR02395">
    <property type="entry name" value="rpoN_sigma"/>
    <property type="match status" value="1"/>
</dbReference>
<dbReference type="PANTHER" id="PTHR32248">
    <property type="entry name" value="RNA POLYMERASE SIGMA-54 FACTOR"/>
    <property type="match status" value="1"/>
</dbReference>
<dbReference type="PANTHER" id="PTHR32248:SF4">
    <property type="entry name" value="RNA POLYMERASE SIGMA-54 FACTOR"/>
    <property type="match status" value="1"/>
</dbReference>
<dbReference type="Pfam" id="PF00309">
    <property type="entry name" value="Sigma54_AID"/>
    <property type="match status" value="1"/>
</dbReference>
<dbReference type="Pfam" id="PF04963">
    <property type="entry name" value="Sigma54_CBD"/>
    <property type="match status" value="1"/>
</dbReference>
<dbReference type="Pfam" id="PF04552">
    <property type="entry name" value="Sigma54_DBD"/>
    <property type="match status" value="1"/>
</dbReference>
<dbReference type="PIRSF" id="PIRSF000774">
    <property type="entry name" value="RpoN"/>
    <property type="match status" value="1"/>
</dbReference>
<dbReference type="PRINTS" id="PR00045">
    <property type="entry name" value="SIGMA54FCT"/>
</dbReference>
<dbReference type="PROSITE" id="PS00717">
    <property type="entry name" value="SIGMA54_1"/>
    <property type="match status" value="1"/>
</dbReference>
<dbReference type="PROSITE" id="PS00718">
    <property type="entry name" value="SIGMA54_2"/>
    <property type="match status" value="1"/>
</dbReference>
<dbReference type="PROSITE" id="PS50044">
    <property type="entry name" value="SIGMA54_3"/>
    <property type="match status" value="1"/>
</dbReference>
<protein>
    <recommendedName>
        <fullName>RNA polymerase sigma-54 factor</fullName>
    </recommendedName>
</protein>
<keyword id="KW-0238">DNA-binding</keyword>
<keyword id="KW-0240">DNA-directed RNA polymerase</keyword>
<keyword id="KW-0548">Nucleotidyltransferase</keyword>
<keyword id="KW-0731">Sigma factor</keyword>
<keyword id="KW-0804">Transcription</keyword>
<keyword id="KW-0805">Transcription regulation</keyword>
<keyword id="KW-0808">Transferase</keyword>
<accession>O08429</accession>
<sequence length="486" mass="54642">MKPSLQLKLGQQLAMTPQLQQAIRLLQLSTLELQQEIQEALESNPLLDVEEAYEENATADVHSINEEKEASAEVLDIEPQDSSDLIEKSEISSELEIDTTWDDVYSANTGSTGIALDDDMPVYQGETTQTLQDYLLWQLDLTPFSDTDRSIALALIDAIDDYGYLTVSLDDILESFADENIELDEIEAVRKRVQQFDPLGVASVNLQDCLLLQLATYPASTPWLEEAKQLLIQHIDLLGNRDYKLIIKETKLKEEDLREVLQLIQQLDPRPGNNISTEHAEYVVPDVSVYKDHGKWVVTINPDSVPKLKINQQYAALGKGNSADSNYIRSNLQEAKWLIKSLESRNETLLKVAKCIVEHQRDFFEYGEEAMKPMVLNDVALAVEMHESTISRVTTQKYMHTPRGIFELKYFFSSHVSTDSGGECSSTAIRALIKKLVAAENTAKPLSDSKIADLLADQGIQVARRTIAKYRESLGIAPSSQRKRLL</sequence>
<feature type="chain" id="PRO_0000205546" description="RNA polymerase sigma-54 factor">
    <location>
        <begin position="1"/>
        <end position="486"/>
    </location>
</feature>
<feature type="DNA-binding region" description="H-T-H motif" evidence="1">
    <location>
        <begin position="375"/>
        <end position="394"/>
    </location>
</feature>
<feature type="short sequence motif" description="RPON box">
    <location>
        <begin position="463"/>
        <end position="471"/>
    </location>
</feature>
<gene>
    <name type="primary">rpoN</name>
</gene>
<proteinExistence type="inferred from homology"/>